<protein>
    <recommendedName>
        <fullName evidence="1">GTPase Obg</fullName>
        <ecNumber evidence="1">3.6.5.-</ecNumber>
    </recommendedName>
    <alternativeName>
        <fullName evidence="1">GTP-binding protein Obg</fullName>
    </alternativeName>
</protein>
<feature type="chain" id="PRO_0000386009" description="GTPase Obg">
    <location>
        <begin position="1"/>
        <end position="341"/>
    </location>
</feature>
<feature type="domain" description="Obg" evidence="2">
    <location>
        <begin position="1"/>
        <end position="159"/>
    </location>
</feature>
<feature type="domain" description="OBG-type G" evidence="1">
    <location>
        <begin position="160"/>
        <end position="334"/>
    </location>
</feature>
<feature type="region of interest" description="Disordered" evidence="3">
    <location>
        <begin position="128"/>
        <end position="150"/>
    </location>
</feature>
<feature type="compositionally biased region" description="Polar residues" evidence="3">
    <location>
        <begin position="129"/>
        <end position="144"/>
    </location>
</feature>
<feature type="binding site" evidence="1">
    <location>
        <begin position="166"/>
        <end position="173"/>
    </location>
    <ligand>
        <name>GTP</name>
        <dbReference type="ChEBI" id="CHEBI:37565"/>
    </ligand>
</feature>
<feature type="binding site" evidence="1">
    <location>
        <position position="173"/>
    </location>
    <ligand>
        <name>Mg(2+)</name>
        <dbReference type="ChEBI" id="CHEBI:18420"/>
    </ligand>
</feature>
<feature type="binding site" evidence="1">
    <location>
        <begin position="191"/>
        <end position="195"/>
    </location>
    <ligand>
        <name>GTP</name>
        <dbReference type="ChEBI" id="CHEBI:37565"/>
    </ligand>
</feature>
<feature type="binding site" evidence="1">
    <location>
        <position position="193"/>
    </location>
    <ligand>
        <name>Mg(2+)</name>
        <dbReference type="ChEBI" id="CHEBI:18420"/>
    </ligand>
</feature>
<feature type="binding site" evidence="1">
    <location>
        <begin position="213"/>
        <end position="216"/>
    </location>
    <ligand>
        <name>GTP</name>
        <dbReference type="ChEBI" id="CHEBI:37565"/>
    </ligand>
</feature>
<feature type="binding site" evidence="1">
    <location>
        <begin position="283"/>
        <end position="286"/>
    </location>
    <ligand>
        <name>GTP</name>
        <dbReference type="ChEBI" id="CHEBI:37565"/>
    </ligand>
</feature>
<feature type="binding site" evidence="1">
    <location>
        <begin position="315"/>
        <end position="317"/>
    </location>
    <ligand>
        <name>GTP</name>
        <dbReference type="ChEBI" id="CHEBI:37565"/>
    </ligand>
</feature>
<keyword id="KW-0963">Cytoplasm</keyword>
<keyword id="KW-0342">GTP-binding</keyword>
<keyword id="KW-0378">Hydrolase</keyword>
<keyword id="KW-0460">Magnesium</keyword>
<keyword id="KW-0479">Metal-binding</keyword>
<keyword id="KW-0547">Nucleotide-binding</keyword>
<sequence length="341" mass="36749">MKFVDEALIKVEAGKGGNGCLSFRREKFIPRGGPDGGDGGDGGSIYFEASSDLNTLIDFRYTRQYKAENGQSGMGGNCTGKKGEDLTIKVPVGTMVYDADTGELLADISQPGVPMLIAQGGFHGLGNTRYKSSVNRSPRQTTPGSPGESRNLRLELRVLADVGLLGLPNAGKSTLIRAVSSSKAKVADYPFTTLHPGLGVVRVSPYKSFVMADIPGLIEGAAQGAGLGHRFLKHLSRTCVLLHVIDIAPLDGSDPVADAKAILNELTQYNPDLLNKPRWLVLNKIDMLPDAKEREEKIQSIIKGLEWKDKVFSISAIESKGTQELCYALMQLIDEMKKSEA</sequence>
<name>OBG_LEGPL</name>
<organism>
    <name type="scientific">Legionella pneumophila (strain Lens)</name>
    <dbReference type="NCBI Taxonomy" id="297245"/>
    <lineage>
        <taxon>Bacteria</taxon>
        <taxon>Pseudomonadati</taxon>
        <taxon>Pseudomonadota</taxon>
        <taxon>Gammaproteobacteria</taxon>
        <taxon>Legionellales</taxon>
        <taxon>Legionellaceae</taxon>
        <taxon>Legionella</taxon>
    </lineage>
</organism>
<proteinExistence type="inferred from homology"/>
<dbReference type="EC" id="3.6.5.-" evidence="1"/>
<dbReference type="EMBL" id="CR628337">
    <property type="protein sequence ID" value="CAH16815.1"/>
    <property type="molecule type" value="Genomic_DNA"/>
</dbReference>
<dbReference type="RefSeq" id="WP_011216521.1">
    <property type="nucleotide sequence ID" value="NC_006369.1"/>
</dbReference>
<dbReference type="SMR" id="Q5WTF1"/>
<dbReference type="KEGG" id="lpf:lpl2574"/>
<dbReference type="LegioList" id="lpl2574"/>
<dbReference type="HOGENOM" id="CLU_011747_2_0_6"/>
<dbReference type="Proteomes" id="UP000002517">
    <property type="component" value="Chromosome"/>
</dbReference>
<dbReference type="GO" id="GO:0005737">
    <property type="term" value="C:cytoplasm"/>
    <property type="evidence" value="ECO:0007669"/>
    <property type="project" value="UniProtKB-SubCell"/>
</dbReference>
<dbReference type="GO" id="GO:0005525">
    <property type="term" value="F:GTP binding"/>
    <property type="evidence" value="ECO:0007669"/>
    <property type="project" value="UniProtKB-UniRule"/>
</dbReference>
<dbReference type="GO" id="GO:0003924">
    <property type="term" value="F:GTPase activity"/>
    <property type="evidence" value="ECO:0007669"/>
    <property type="project" value="UniProtKB-UniRule"/>
</dbReference>
<dbReference type="GO" id="GO:0000287">
    <property type="term" value="F:magnesium ion binding"/>
    <property type="evidence" value="ECO:0007669"/>
    <property type="project" value="InterPro"/>
</dbReference>
<dbReference type="GO" id="GO:0042254">
    <property type="term" value="P:ribosome biogenesis"/>
    <property type="evidence" value="ECO:0007669"/>
    <property type="project" value="UniProtKB-UniRule"/>
</dbReference>
<dbReference type="CDD" id="cd01898">
    <property type="entry name" value="Obg"/>
    <property type="match status" value="1"/>
</dbReference>
<dbReference type="FunFam" id="2.70.210.12:FF:000001">
    <property type="entry name" value="GTPase Obg"/>
    <property type="match status" value="1"/>
</dbReference>
<dbReference type="Gene3D" id="2.70.210.12">
    <property type="entry name" value="GTP1/OBG domain"/>
    <property type="match status" value="1"/>
</dbReference>
<dbReference type="Gene3D" id="3.40.50.300">
    <property type="entry name" value="P-loop containing nucleotide triphosphate hydrolases"/>
    <property type="match status" value="1"/>
</dbReference>
<dbReference type="HAMAP" id="MF_01454">
    <property type="entry name" value="GTPase_Obg"/>
    <property type="match status" value="1"/>
</dbReference>
<dbReference type="InterPro" id="IPR031167">
    <property type="entry name" value="G_OBG"/>
</dbReference>
<dbReference type="InterPro" id="IPR006073">
    <property type="entry name" value="GTP-bd"/>
</dbReference>
<dbReference type="InterPro" id="IPR014100">
    <property type="entry name" value="GTP-bd_Obg/CgtA"/>
</dbReference>
<dbReference type="InterPro" id="IPR006074">
    <property type="entry name" value="GTP1-OBG_CS"/>
</dbReference>
<dbReference type="InterPro" id="IPR006169">
    <property type="entry name" value="GTP1_OBG_dom"/>
</dbReference>
<dbReference type="InterPro" id="IPR036726">
    <property type="entry name" value="GTP1_OBG_dom_sf"/>
</dbReference>
<dbReference type="InterPro" id="IPR045086">
    <property type="entry name" value="OBG_GTPase"/>
</dbReference>
<dbReference type="InterPro" id="IPR027417">
    <property type="entry name" value="P-loop_NTPase"/>
</dbReference>
<dbReference type="InterPro" id="IPR005225">
    <property type="entry name" value="Small_GTP-bd"/>
</dbReference>
<dbReference type="NCBIfam" id="TIGR02729">
    <property type="entry name" value="Obg_CgtA"/>
    <property type="match status" value="1"/>
</dbReference>
<dbReference type="NCBIfam" id="NF008954">
    <property type="entry name" value="PRK12296.1"/>
    <property type="match status" value="1"/>
</dbReference>
<dbReference type="NCBIfam" id="NF008955">
    <property type="entry name" value="PRK12297.1"/>
    <property type="match status" value="1"/>
</dbReference>
<dbReference type="NCBIfam" id="NF008956">
    <property type="entry name" value="PRK12299.1"/>
    <property type="match status" value="1"/>
</dbReference>
<dbReference type="NCBIfam" id="TIGR00231">
    <property type="entry name" value="small_GTP"/>
    <property type="match status" value="1"/>
</dbReference>
<dbReference type="PANTHER" id="PTHR11702">
    <property type="entry name" value="DEVELOPMENTALLY REGULATED GTP-BINDING PROTEIN-RELATED"/>
    <property type="match status" value="1"/>
</dbReference>
<dbReference type="PANTHER" id="PTHR11702:SF31">
    <property type="entry name" value="MITOCHONDRIAL RIBOSOME-ASSOCIATED GTPASE 2"/>
    <property type="match status" value="1"/>
</dbReference>
<dbReference type="Pfam" id="PF01018">
    <property type="entry name" value="GTP1_OBG"/>
    <property type="match status" value="1"/>
</dbReference>
<dbReference type="Pfam" id="PF01926">
    <property type="entry name" value="MMR_HSR1"/>
    <property type="match status" value="1"/>
</dbReference>
<dbReference type="PIRSF" id="PIRSF002401">
    <property type="entry name" value="GTP_bd_Obg/CgtA"/>
    <property type="match status" value="1"/>
</dbReference>
<dbReference type="PRINTS" id="PR00326">
    <property type="entry name" value="GTP1OBG"/>
</dbReference>
<dbReference type="SUPFAM" id="SSF82051">
    <property type="entry name" value="Obg GTP-binding protein N-terminal domain"/>
    <property type="match status" value="1"/>
</dbReference>
<dbReference type="SUPFAM" id="SSF52540">
    <property type="entry name" value="P-loop containing nucleoside triphosphate hydrolases"/>
    <property type="match status" value="1"/>
</dbReference>
<dbReference type="PROSITE" id="PS51710">
    <property type="entry name" value="G_OBG"/>
    <property type="match status" value="1"/>
</dbReference>
<dbReference type="PROSITE" id="PS00905">
    <property type="entry name" value="GTP1_OBG"/>
    <property type="match status" value="1"/>
</dbReference>
<dbReference type="PROSITE" id="PS51883">
    <property type="entry name" value="OBG"/>
    <property type="match status" value="1"/>
</dbReference>
<evidence type="ECO:0000255" key="1">
    <source>
        <dbReference type="HAMAP-Rule" id="MF_01454"/>
    </source>
</evidence>
<evidence type="ECO:0000255" key="2">
    <source>
        <dbReference type="PROSITE-ProRule" id="PRU01231"/>
    </source>
</evidence>
<evidence type="ECO:0000256" key="3">
    <source>
        <dbReference type="SAM" id="MobiDB-lite"/>
    </source>
</evidence>
<reference key="1">
    <citation type="journal article" date="2004" name="Nat. Genet.">
        <title>Evidence in the Legionella pneumophila genome for exploitation of host cell functions and high genome plasticity.</title>
        <authorList>
            <person name="Cazalet C."/>
            <person name="Rusniok C."/>
            <person name="Brueggemann H."/>
            <person name="Zidane N."/>
            <person name="Magnier A."/>
            <person name="Ma L."/>
            <person name="Tichit M."/>
            <person name="Jarraud S."/>
            <person name="Bouchier C."/>
            <person name="Vandenesch F."/>
            <person name="Kunst F."/>
            <person name="Etienne J."/>
            <person name="Glaser P."/>
            <person name="Buchrieser C."/>
        </authorList>
    </citation>
    <scope>NUCLEOTIDE SEQUENCE [LARGE SCALE GENOMIC DNA]</scope>
    <source>
        <strain>Lens</strain>
    </source>
</reference>
<gene>
    <name evidence="1" type="primary">obg</name>
    <name type="ordered locus">lpl2574</name>
</gene>
<accession>Q5WTF1</accession>
<comment type="function">
    <text evidence="1">An essential GTPase which binds GTP, GDP and possibly (p)ppGpp with moderate affinity, with high nucleotide exchange rates and a fairly low GTP hydrolysis rate. Plays a role in control of the cell cycle, stress response, ribosome biogenesis and in those bacteria that undergo differentiation, in morphogenesis control.</text>
</comment>
<comment type="cofactor">
    <cofactor evidence="1">
        <name>Mg(2+)</name>
        <dbReference type="ChEBI" id="CHEBI:18420"/>
    </cofactor>
</comment>
<comment type="subunit">
    <text evidence="1">Monomer.</text>
</comment>
<comment type="subcellular location">
    <subcellularLocation>
        <location evidence="1">Cytoplasm</location>
    </subcellularLocation>
</comment>
<comment type="similarity">
    <text evidence="1">Belongs to the TRAFAC class OBG-HflX-like GTPase superfamily. OBG GTPase family.</text>
</comment>